<accession>B5Z3S9</accession>
<comment type="function">
    <text evidence="1">Catalyzes the ATP-dependent transfer of a sulfur to tRNA to produce 4-thiouridine in position 8 of tRNAs, which functions as a near-UV photosensor. Also catalyzes the transfer of sulfur to the sulfur carrier protein ThiS, forming ThiS-thiocarboxylate. This is a step in the synthesis of thiazole, in the thiamine biosynthesis pathway. The sulfur is donated as persulfide by IscS.</text>
</comment>
<comment type="catalytic activity">
    <reaction evidence="1">
        <text>[ThiI sulfur-carrier protein]-S-sulfanyl-L-cysteine + a uridine in tRNA + 2 reduced [2Fe-2S]-[ferredoxin] + ATP + H(+) = [ThiI sulfur-carrier protein]-L-cysteine + a 4-thiouridine in tRNA + 2 oxidized [2Fe-2S]-[ferredoxin] + AMP + diphosphate</text>
        <dbReference type="Rhea" id="RHEA:24176"/>
        <dbReference type="Rhea" id="RHEA-COMP:10000"/>
        <dbReference type="Rhea" id="RHEA-COMP:10001"/>
        <dbReference type="Rhea" id="RHEA-COMP:13337"/>
        <dbReference type="Rhea" id="RHEA-COMP:13338"/>
        <dbReference type="Rhea" id="RHEA-COMP:13339"/>
        <dbReference type="Rhea" id="RHEA-COMP:13340"/>
        <dbReference type="ChEBI" id="CHEBI:15378"/>
        <dbReference type="ChEBI" id="CHEBI:29950"/>
        <dbReference type="ChEBI" id="CHEBI:30616"/>
        <dbReference type="ChEBI" id="CHEBI:33019"/>
        <dbReference type="ChEBI" id="CHEBI:33737"/>
        <dbReference type="ChEBI" id="CHEBI:33738"/>
        <dbReference type="ChEBI" id="CHEBI:61963"/>
        <dbReference type="ChEBI" id="CHEBI:65315"/>
        <dbReference type="ChEBI" id="CHEBI:136798"/>
        <dbReference type="ChEBI" id="CHEBI:456215"/>
        <dbReference type="EC" id="2.8.1.4"/>
    </reaction>
</comment>
<comment type="catalytic activity">
    <reaction evidence="1">
        <text>[ThiS sulfur-carrier protein]-C-terminal Gly-Gly-AMP + S-sulfanyl-L-cysteinyl-[cysteine desulfurase] + AH2 = [ThiS sulfur-carrier protein]-C-terminal-Gly-aminoethanethioate + L-cysteinyl-[cysteine desulfurase] + A + AMP + 2 H(+)</text>
        <dbReference type="Rhea" id="RHEA:43340"/>
        <dbReference type="Rhea" id="RHEA-COMP:12157"/>
        <dbReference type="Rhea" id="RHEA-COMP:12158"/>
        <dbReference type="Rhea" id="RHEA-COMP:12910"/>
        <dbReference type="Rhea" id="RHEA-COMP:19908"/>
        <dbReference type="ChEBI" id="CHEBI:13193"/>
        <dbReference type="ChEBI" id="CHEBI:15378"/>
        <dbReference type="ChEBI" id="CHEBI:17499"/>
        <dbReference type="ChEBI" id="CHEBI:29950"/>
        <dbReference type="ChEBI" id="CHEBI:61963"/>
        <dbReference type="ChEBI" id="CHEBI:90618"/>
        <dbReference type="ChEBI" id="CHEBI:232372"/>
        <dbReference type="ChEBI" id="CHEBI:456215"/>
    </reaction>
</comment>
<comment type="pathway">
    <text evidence="1">Cofactor biosynthesis; thiamine diphosphate biosynthesis.</text>
</comment>
<comment type="subcellular location">
    <subcellularLocation>
        <location evidence="1">Cytoplasm</location>
    </subcellularLocation>
</comment>
<comment type="similarity">
    <text evidence="1">Belongs to the ThiI family.</text>
</comment>
<sequence>MKFIIKLFPEITIKSQSVRLRFIKILTGNIRNVLKHYDETLAVVRHWDNIEVRAKDENQRLTIRDALTRIPGIHHILEVEDVPFTDMHDIFEKALVQYRDQLDGKTFCVRVKRRGKHDFSSIDVERYVGGGLNQHIESARVKLTNPDVTVHLEVEDDRLLLIKGRYEGIGGFPIGTQEDVLSLISGGFDSGVSSYMLMRRGCRVHYCFFNLGGAAHEIGVRQVAHYLWNRFGSSHRVRFVAINFEPVVGEILEKIDDGQMGVILKRMMVRAASKVAERYGVQALVTGEALGQVSSQTLTNLRLIDNVSDTLILRPLISYDKEHIINLARQIGTEDFARTMPEYCGVISKSPTVKAVKSKIEAEEEKFDFSILDKVVEEANNVDIREIAQQTGQEVVEVETVNDFGPNDVILDIRSVDEQEDKPLKVEGIDVVSLPFYKLSTKFGDLDQNRTWLLWCERGVMSRLQALYLREQGFKNVKVYRP</sequence>
<protein>
    <recommendedName>
        <fullName evidence="1">tRNA sulfurtransferase</fullName>
        <ecNumber evidence="1">2.8.1.4</ecNumber>
    </recommendedName>
    <alternativeName>
        <fullName evidence="1">Sulfur carrier protein ThiS sulfurtransferase</fullName>
    </alternativeName>
    <alternativeName>
        <fullName evidence="1">Thiamine biosynthesis protein ThiI</fullName>
    </alternativeName>
    <alternativeName>
        <fullName evidence="1">tRNA 4-thiouridine synthase</fullName>
    </alternativeName>
</protein>
<gene>
    <name evidence="1" type="primary">thiI</name>
    <name type="ordered locus">ECH74115_0507</name>
</gene>
<proteinExistence type="inferred from homology"/>
<name>THII_ECO5E</name>
<feature type="chain" id="PRO_1000090011" description="tRNA sulfurtransferase">
    <location>
        <begin position="1"/>
        <end position="482"/>
    </location>
</feature>
<feature type="domain" description="THUMP" evidence="1">
    <location>
        <begin position="61"/>
        <end position="165"/>
    </location>
</feature>
<feature type="domain" description="Rhodanese" evidence="1">
    <location>
        <begin position="404"/>
        <end position="482"/>
    </location>
</feature>
<feature type="active site" description="Cysteine persulfide intermediate" evidence="1">
    <location>
        <position position="456"/>
    </location>
</feature>
<feature type="binding site" evidence="1">
    <location>
        <begin position="183"/>
        <end position="184"/>
    </location>
    <ligand>
        <name>ATP</name>
        <dbReference type="ChEBI" id="CHEBI:30616"/>
    </ligand>
</feature>
<feature type="binding site" evidence="1">
    <location>
        <position position="265"/>
    </location>
    <ligand>
        <name>ATP</name>
        <dbReference type="ChEBI" id="CHEBI:30616"/>
    </ligand>
</feature>
<feature type="binding site" evidence="1">
    <location>
        <position position="287"/>
    </location>
    <ligand>
        <name>ATP</name>
        <dbReference type="ChEBI" id="CHEBI:30616"/>
    </ligand>
</feature>
<feature type="binding site" evidence="1">
    <location>
        <position position="296"/>
    </location>
    <ligand>
        <name>ATP</name>
        <dbReference type="ChEBI" id="CHEBI:30616"/>
    </ligand>
</feature>
<feature type="disulfide bond" description="Redox-active" evidence="1">
    <location>
        <begin position="344"/>
        <end position="456"/>
    </location>
</feature>
<keyword id="KW-0067">ATP-binding</keyword>
<keyword id="KW-0963">Cytoplasm</keyword>
<keyword id="KW-1015">Disulfide bond</keyword>
<keyword id="KW-0547">Nucleotide-binding</keyword>
<keyword id="KW-0676">Redox-active center</keyword>
<keyword id="KW-0694">RNA-binding</keyword>
<keyword id="KW-0784">Thiamine biosynthesis</keyword>
<keyword id="KW-0808">Transferase</keyword>
<keyword id="KW-0820">tRNA-binding</keyword>
<organism>
    <name type="scientific">Escherichia coli O157:H7 (strain EC4115 / EHEC)</name>
    <dbReference type="NCBI Taxonomy" id="444450"/>
    <lineage>
        <taxon>Bacteria</taxon>
        <taxon>Pseudomonadati</taxon>
        <taxon>Pseudomonadota</taxon>
        <taxon>Gammaproteobacteria</taxon>
        <taxon>Enterobacterales</taxon>
        <taxon>Enterobacteriaceae</taxon>
        <taxon>Escherichia</taxon>
    </lineage>
</organism>
<dbReference type="EC" id="2.8.1.4" evidence="1"/>
<dbReference type="EMBL" id="CP001164">
    <property type="protein sequence ID" value="ACI35854.1"/>
    <property type="molecule type" value="Genomic_DNA"/>
</dbReference>
<dbReference type="RefSeq" id="WP_000668700.1">
    <property type="nucleotide sequence ID" value="NC_011353.1"/>
</dbReference>
<dbReference type="SMR" id="B5Z3S9"/>
<dbReference type="KEGG" id="ecf:ECH74115_0507"/>
<dbReference type="HOGENOM" id="CLU_037952_4_1_6"/>
<dbReference type="UniPathway" id="UPA00060"/>
<dbReference type="GO" id="GO:0005829">
    <property type="term" value="C:cytosol"/>
    <property type="evidence" value="ECO:0007669"/>
    <property type="project" value="TreeGrafter"/>
</dbReference>
<dbReference type="GO" id="GO:0005524">
    <property type="term" value="F:ATP binding"/>
    <property type="evidence" value="ECO:0007669"/>
    <property type="project" value="UniProtKB-UniRule"/>
</dbReference>
<dbReference type="GO" id="GO:0004810">
    <property type="term" value="F:CCA tRNA nucleotidyltransferase activity"/>
    <property type="evidence" value="ECO:0007669"/>
    <property type="project" value="InterPro"/>
</dbReference>
<dbReference type="GO" id="GO:0000049">
    <property type="term" value="F:tRNA binding"/>
    <property type="evidence" value="ECO:0007669"/>
    <property type="project" value="UniProtKB-UniRule"/>
</dbReference>
<dbReference type="GO" id="GO:0140741">
    <property type="term" value="F:tRNA-uracil-4 sulfurtransferase activity"/>
    <property type="evidence" value="ECO:0007669"/>
    <property type="project" value="UniProtKB-EC"/>
</dbReference>
<dbReference type="GO" id="GO:0009228">
    <property type="term" value="P:thiamine biosynthetic process"/>
    <property type="evidence" value="ECO:0007669"/>
    <property type="project" value="UniProtKB-KW"/>
</dbReference>
<dbReference type="GO" id="GO:0009229">
    <property type="term" value="P:thiamine diphosphate biosynthetic process"/>
    <property type="evidence" value="ECO:0007669"/>
    <property type="project" value="UniProtKB-UniRule"/>
</dbReference>
<dbReference type="GO" id="GO:0052837">
    <property type="term" value="P:thiazole biosynthetic process"/>
    <property type="evidence" value="ECO:0007669"/>
    <property type="project" value="InterPro"/>
</dbReference>
<dbReference type="GO" id="GO:0002937">
    <property type="term" value="P:tRNA 4-thiouridine biosynthesis"/>
    <property type="evidence" value="ECO:0007669"/>
    <property type="project" value="TreeGrafter"/>
</dbReference>
<dbReference type="CDD" id="cd01712">
    <property type="entry name" value="PPase_ThiI"/>
    <property type="match status" value="1"/>
</dbReference>
<dbReference type="CDD" id="cd00158">
    <property type="entry name" value="RHOD"/>
    <property type="match status" value="1"/>
</dbReference>
<dbReference type="CDD" id="cd11716">
    <property type="entry name" value="THUMP_ThiI"/>
    <property type="match status" value="1"/>
</dbReference>
<dbReference type="FunFam" id="3.30.2130.30:FF:000002">
    <property type="entry name" value="tRNA sulfurtransferase"/>
    <property type="match status" value="1"/>
</dbReference>
<dbReference type="FunFam" id="3.40.250.10:FF:000003">
    <property type="entry name" value="tRNA sulfurtransferase"/>
    <property type="match status" value="1"/>
</dbReference>
<dbReference type="FunFam" id="3.40.50.620:FF:000029">
    <property type="entry name" value="tRNA sulfurtransferase"/>
    <property type="match status" value="1"/>
</dbReference>
<dbReference type="Gene3D" id="3.30.2130.30">
    <property type="match status" value="1"/>
</dbReference>
<dbReference type="Gene3D" id="3.40.50.620">
    <property type="entry name" value="HUPs"/>
    <property type="match status" value="1"/>
</dbReference>
<dbReference type="Gene3D" id="3.40.250.10">
    <property type="entry name" value="Rhodanese-like domain"/>
    <property type="match status" value="1"/>
</dbReference>
<dbReference type="HAMAP" id="MF_00021">
    <property type="entry name" value="ThiI"/>
    <property type="match status" value="1"/>
</dbReference>
<dbReference type="InterPro" id="IPR001763">
    <property type="entry name" value="Rhodanese-like_dom"/>
</dbReference>
<dbReference type="InterPro" id="IPR036873">
    <property type="entry name" value="Rhodanese-like_dom_sf"/>
</dbReference>
<dbReference type="InterPro" id="IPR014729">
    <property type="entry name" value="Rossmann-like_a/b/a_fold"/>
</dbReference>
<dbReference type="InterPro" id="IPR020536">
    <property type="entry name" value="ThiI_AANH"/>
</dbReference>
<dbReference type="InterPro" id="IPR054173">
    <property type="entry name" value="ThiI_fer"/>
</dbReference>
<dbReference type="InterPro" id="IPR049961">
    <property type="entry name" value="ThiI_N"/>
</dbReference>
<dbReference type="InterPro" id="IPR026340">
    <property type="entry name" value="THII_Thiazole_biosynth_dom"/>
</dbReference>
<dbReference type="InterPro" id="IPR004114">
    <property type="entry name" value="THUMP_dom"/>
</dbReference>
<dbReference type="InterPro" id="IPR049962">
    <property type="entry name" value="THUMP_ThiI"/>
</dbReference>
<dbReference type="InterPro" id="IPR003720">
    <property type="entry name" value="tRNA_STrfase"/>
</dbReference>
<dbReference type="InterPro" id="IPR050102">
    <property type="entry name" value="tRNA_sulfurtransferase_ThiI"/>
</dbReference>
<dbReference type="NCBIfam" id="TIGR04271">
    <property type="entry name" value="ThiI_C_thiazole"/>
    <property type="match status" value="1"/>
</dbReference>
<dbReference type="NCBIfam" id="TIGR00342">
    <property type="entry name" value="tRNA uracil 4-sulfurtransferase ThiI"/>
    <property type="match status" value="1"/>
</dbReference>
<dbReference type="PANTHER" id="PTHR43209">
    <property type="entry name" value="TRNA SULFURTRANSFERASE"/>
    <property type="match status" value="1"/>
</dbReference>
<dbReference type="PANTHER" id="PTHR43209:SF1">
    <property type="entry name" value="TRNA SULFURTRANSFERASE"/>
    <property type="match status" value="1"/>
</dbReference>
<dbReference type="Pfam" id="PF02568">
    <property type="entry name" value="ThiI"/>
    <property type="match status" value="1"/>
</dbReference>
<dbReference type="Pfam" id="PF22025">
    <property type="entry name" value="ThiI_fer"/>
    <property type="match status" value="1"/>
</dbReference>
<dbReference type="Pfam" id="PF02926">
    <property type="entry name" value="THUMP"/>
    <property type="match status" value="1"/>
</dbReference>
<dbReference type="SMART" id="SM00981">
    <property type="entry name" value="THUMP"/>
    <property type="match status" value="1"/>
</dbReference>
<dbReference type="SUPFAM" id="SSF52402">
    <property type="entry name" value="Adenine nucleotide alpha hydrolases-like"/>
    <property type="match status" value="1"/>
</dbReference>
<dbReference type="SUPFAM" id="SSF52821">
    <property type="entry name" value="Rhodanese/Cell cycle control phosphatase"/>
    <property type="match status" value="1"/>
</dbReference>
<dbReference type="SUPFAM" id="SSF143437">
    <property type="entry name" value="THUMP domain-like"/>
    <property type="match status" value="1"/>
</dbReference>
<dbReference type="PROSITE" id="PS50206">
    <property type="entry name" value="RHODANESE_3"/>
    <property type="match status" value="1"/>
</dbReference>
<dbReference type="PROSITE" id="PS51165">
    <property type="entry name" value="THUMP"/>
    <property type="match status" value="1"/>
</dbReference>
<evidence type="ECO:0000255" key="1">
    <source>
        <dbReference type="HAMAP-Rule" id="MF_00021"/>
    </source>
</evidence>
<reference key="1">
    <citation type="journal article" date="2011" name="Proc. Natl. Acad. Sci. U.S.A.">
        <title>Genomic anatomy of Escherichia coli O157:H7 outbreaks.</title>
        <authorList>
            <person name="Eppinger M."/>
            <person name="Mammel M.K."/>
            <person name="Leclerc J.E."/>
            <person name="Ravel J."/>
            <person name="Cebula T.A."/>
        </authorList>
    </citation>
    <scope>NUCLEOTIDE SEQUENCE [LARGE SCALE GENOMIC DNA]</scope>
    <source>
        <strain>EC4115 / EHEC</strain>
    </source>
</reference>